<gene>
    <name type="primary">PPP1R11</name>
    <name type="synonym">HCGV</name>
    <name type="synonym">TCTE5</name>
</gene>
<proteinExistence type="evidence at protein level"/>
<feature type="initiator methionine" description="Removed" evidence="8">
    <location>
        <position position="1"/>
    </location>
</feature>
<feature type="chain" id="PRO_0000239619" description="E3 ubiquitin-protein ligase PPP1R11">
    <location>
        <begin position="2"/>
        <end position="126"/>
    </location>
</feature>
<feature type="region of interest" description="Disordered" evidence="2">
    <location>
        <begin position="1"/>
        <end position="25"/>
    </location>
</feature>
<feature type="region of interest" description="Atypical RING finger domain 1" evidence="3">
    <location>
        <begin position="52"/>
        <end position="62"/>
    </location>
</feature>
<feature type="region of interest" description="Disordered" evidence="2">
    <location>
        <begin position="70"/>
        <end position="126"/>
    </location>
</feature>
<feature type="region of interest" description="Atypical RING finger domain 2" evidence="3">
    <location>
        <begin position="85"/>
        <end position="94"/>
    </location>
</feature>
<feature type="compositionally biased region" description="Low complexity" evidence="2">
    <location>
        <begin position="10"/>
        <end position="22"/>
    </location>
</feature>
<feature type="compositionally biased region" description="Basic residues" evidence="2">
    <location>
        <begin position="89"/>
        <end position="101"/>
    </location>
</feature>
<feature type="compositionally biased region" description="Pro residues" evidence="2">
    <location>
        <begin position="107"/>
        <end position="126"/>
    </location>
</feature>
<feature type="modified residue" description="N-acetylalanine" evidence="8">
    <location>
        <position position="2"/>
    </location>
</feature>
<feature type="modified residue" description="Phosphoserine" evidence="7">
    <location>
        <position position="73"/>
    </location>
</feature>
<feature type="modified residue" description="Phosphoserine" evidence="7">
    <location>
        <position position="74"/>
    </location>
</feature>
<feature type="modified residue" description="Phosphothreonine" evidence="7">
    <location>
        <position position="75"/>
    </location>
</feature>
<feature type="modified residue" description="Phosphoserine" evidence="7">
    <location>
        <position position="77"/>
    </location>
</feature>
<feature type="modified residue" description="Phosphothreonine" evidence="7">
    <location>
        <position position="109"/>
    </location>
</feature>
<feature type="mutagenesis site" description="Loss of function in inducing TLR2 degradation." evidence="3">
    <original>H</original>
    <variation>A</variation>
    <location>
        <position position="52"/>
    </location>
</feature>
<feature type="mutagenesis site" description="Loss of function in inducing TLR2 degradation." evidence="3">
    <original>CCC</original>
    <variation>SSS</variation>
    <location>
        <begin position="60"/>
        <end position="62"/>
    </location>
</feature>
<feature type="mutagenesis site" description="Loss of function in inducing TLR2 degradation." evidence="3">
    <original>C</original>
    <variation>S</variation>
    <location>
        <position position="85"/>
    </location>
</feature>
<feature type="mutagenesis site" description="Loss of function in inducing TLR2 degradation." evidence="3">
    <original>H</original>
    <variation>A</variation>
    <location>
        <position position="87"/>
    </location>
</feature>
<feature type="mutagenesis site" description="Loss of function in inducing TLR2 degradation." evidence="3">
    <original>HC</original>
    <variation>AS</variation>
    <location>
        <begin position="89"/>
        <end position="90"/>
    </location>
</feature>
<feature type="mutagenesis site" description="Loss of function in inducing TLR2 degradation." evidence="3">
    <original>H</original>
    <variation>A</variation>
    <location>
        <position position="94"/>
    </location>
</feature>
<feature type="turn" evidence="9">
    <location>
        <begin position="51"/>
        <end position="54"/>
    </location>
</feature>
<feature type="strand" evidence="10">
    <location>
        <begin position="57"/>
        <end position="59"/>
    </location>
</feature>
<reference key="1">
    <citation type="journal article" date="1996" name="Immunogenetics">
        <title>Cloning of a human homologue of the mouse Tctex-5 gene within the MHC class I region.</title>
        <authorList>
            <person name="Giffon T."/>
            <person name="Lepourcelet M."/>
            <person name="Pichon L."/>
            <person name="Jezequel P."/>
            <person name="Bouric P."/>
            <person name="Carn G."/>
            <person name="Pontarotti P."/>
            <person name="Gall J.-Y."/>
            <person name="David V."/>
        </authorList>
    </citation>
    <scope>NUCLEOTIDE SEQUENCE [GENOMIC DNA / MRNA]</scope>
    <scope>TISSUE SPECIFICITY</scope>
    <source>
        <tissue>Duodenal mucosa</tissue>
    </source>
</reference>
<reference key="2">
    <citation type="journal article" date="1996" name="Genomics">
        <title>Systematic sequencing of the human HLA-A/HLA-F region: establishment of a cosmid contig and identification of a new gene cluster within 37 kb of sequence.</title>
        <authorList>
            <person name="Lepourcelet M."/>
            <person name="Andrieux N."/>
            <person name="Giffon T."/>
            <person name="Pichon L."/>
            <person name="Hampe A."/>
            <person name="Galibert F."/>
            <person name="Mosser J."/>
        </authorList>
    </citation>
    <scope>NUCLEOTIDE SEQUENCE [GENOMIC DNA]</scope>
</reference>
<reference key="3">
    <citation type="submission" date="1999-09" db="EMBL/GenBank/DDBJ databases">
        <title>Homo sapiens 2,229,817bp genomic DNA of 6p21.3 HLA class I region.</title>
        <authorList>
            <person name="Shiina S."/>
            <person name="Tamiya G."/>
            <person name="Oka A."/>
            <person name="Inoko H."/>
        </authorList>
    </citation>
    <scope>NUCLEOTIDE SEQUENCE [LARGE SCALE GENOMIC DNA]</scope>
</reference>
<reference key="4">
    <citation type="submission" date="2002-07" db="EMBL/GenBank/DDBJ databases">
        <title>Genome diversity in HLA: a new strategy for detection of genetic polymorphisms in expressed genes within the HLA class III and class I regions.</title>
        <authorList>
            <person name="Shiina T."/>
            <person name="Ota M."/>
            <person name="Takasu M."/>
            <person name="Katsuyama Y."/>
            <person name="Hashimoto N."/>
            <person name="Tokunaga K."/>
            <person name="Inoko H."/>
        </authorList>
    </citation>
    <scope>NUCLEOTIDE SEQUENCE [LARGE SCALE GENOMIC DNA]</scope>
    <source>
        <tissue>Peripheral blood leukocyte</tissue>
    </source>
</reference>
<reference key="5">
    <citation type="journal article" date="2003" name="Nature">
        <title>The DNA sequence and analysis of human chromosome 6.</title>
        <authorList>
            <person name="Mungall A.J."/>
            <person name="Palmer S.A."/>
            <person name="Sims S.K."/>
            <person name="Edwards C.A."/>
            <person name="Ashurst J.L."/>
            <person name="Wilming L."/>
            <person name="Jones M.C."/>
            <person name="Horton R."/>
            <person name="Hunt S.E."/>
            <person name="Scott C.E."/>
            <person name="Gilbert J.G.R."/>
            <person name="Clamp M.E."/>
            <person name="Bethel G."/>
            <person name="Milne S."/>
            <person name="Ainscough R."/>
            <person name="Almeida J.P."/>
            <person name="Ambrose K.D."/>
            <person name="Andrews T.D."/>
            <person name="Ashwell R.I.S."/>
            <person name="Babbage A.K."/>
            <person name="Bagguley C.L."/>
            <person name="Bailey J."/>
            <person name="Banerjee R."/>
            <person name="Barker D.J."/>
            <person name="Barlow K.F."/>
            <person name="Bates K."/>
            <person name="Beare D.M."/>
            <person name="Beasley H."/>
            <person name="Beasley O."/>
            <person name="Bird C.P."/>
            <person name="Blakey S.E."/>
            <person name="Bray-Allen S."/>
            <person name="Brook J."/>
            <person name="Brown A.J."/>
            <person name="Brown J.Y."/>
            <person name="Burford D.C."/>
            <person name="Burrill W."/>
            <person name="Burton J."/>
            <person name="Carder C."/>
            <person name="Carter N.P."/>
            <person name="Chapman J.C."/>
            <person name="Clark S.Y."/>
            <person name="Clark G."/>
            <person name="Clee C.M."/>
            <person name="Clegg S."/>
            <person name="Cobley V."/>
            <person name="Collier R.E."/>
            <person name="Collins J.E."/>
            <person name="Colman L.K."/>
            <person name="Corby N.R."/>
            <person name="Coville G.J."/>
            <person name="Culley K.M."/>
            <person name="Dhami P."/>
            <person name="Davies J."/>
            <person name="Dunn M."/>
            <person name="Earthrowl M.E."/>
            <person name="Ellington A.E."/>
            <person name="Evans K.A."/>
            <person name="Faulkner L."/>
            <person name="Francis M.D."/>
            <person name="Frankish A."/>
            <person name="Frankland J."/>
            <person name="French L."/>
            <person name="Garner P."/>
            <person name="Garnett J."/>
            <person name="Ghori M.J."/>
            <person name="Gilby L.M."/>
            <person name="Gillson C.J."/>
            <person name="Glithero R.J."/>
            <person name="Grafham D.V."/>
            <person name="Grant M."/>
            <person name="Gribble S."/>
            <person name="Griffiths C."/>
            <person name="Griffiths M.N.D."/>
            <person name="Hall R."/>
            <person name="Halls K.S."/>
            <person name="Hammond S."/>
            <person name="Harley J.L."/>
            <person name="Hart E.A."/>
            <person name="Heath P.D."/>
            <person name="Heathcott R."/>
            <person name="Holmes S.J."/>
            <person name="Howden P.J."/>
            <person name="Howe K.L."/>
            <person name="Howell G.R."/>
            <person name="Huckle E."/>
            <person name="Humphray S.J."/>
            <person name="Humphries M.D."/>
            <person name="Hunt A.R."/>
            <person name="Johnson C.M."/>
            <person name="Joy A.A."/>
            <person name="Kay M."/>
            <person name="Keenan S.J."/>
            <person name="Kimberley A.M."/>
            <person name="King A."/>
            <person name="Laird G.K."/>
            <person name="Langford C."/>
            <person name="Lawlor S."/>
            <person name="Leongamornlert D.A."/>
            <person name="Leversha M."/>
            <person name="Lloyd C.R."/>
            <person name="Lloyd D.M."/>
            <person name="Loveland J.E."/>
            <person name="Lovell J."/>
            <person name="Martin S."/>
            <person name="Mashreghi-Mohammadi M."/>
            <person name="Maslen G.L."/>
            <person name="Matthews L."/>
            <person name="McCann O.T."/>
            <person name="McLaren S.J."/>
            <person name="McLay K."/>
            <person name="McMurray A."/>
            <person name="Moore M.J.F."/>
            <person name="Mullikin J.C."/>
            <person name="Niblett D."/>
            <person name="Nickerson T."/>
            <person name="Novik K.L."/>
            <person name="Oliver K."/>
            <person name="Overton-Larty E.K."/>
            <person name="Parker A."/>
            <person name="Patel R."/>
            <person name="Pearce A.V."/>
            <person name="Peck A.I."/>
            <person name="Phillimore B.J.C.T."/>
            <person name="Phillips S."/>
            <person name="Plumb R.W."/>
            <person name="Porter K.M."/>
            <person name="Ramsey Y."/>
            <person name="Ranby S.A."/>
            <person name="Rice C.M."/>
            <person name="Ross M.T."/>
            <person name="Searle S.M."/>
            <person name="Sehra H.K."/>
            <person name="Sheridan E."/>
            <person name="Skuce C.D."/>
            <person name="Smith S."/>
            <person name="Smith M."/>
            <person name="Spraggon L."/>
            <person name="Squares S.L."/>
            <person name="Steward C.A."/>
            <person name="Sycamore N."/>
            <person name="Tamlyn-Hall G."/>
            <person name="Tester J."/>
            <person name="Theaker A.J."/>
            <person name="Thomas D.W."/>
            <person name="Thorpe A."/>
            <person name="Tracey A."/>
            <person name="Tromans A."/>
            <person name="Tubby B."/>
            <person name="Wall M."/>
            <person name="Wallis J.M."/>
            <person name="West A.P."/>
            <person name="White S.S."/>
            <person name="Whitehead S.L."/>
            <person name="Whittaker H."/>
            <person name="Wild A."/>
            <person name="Willey D.J."/>
            <person name="Wilmer T.E."/>
            <person name="Wood J.M."/>
            <person name="Wray P.W."/>
            <person name="Wyatt J.C."/>
            <person name="Young L."/>
            <person name="Younger R.M."/>
            <person name="Bentley D.R."/>
            <person name="Coulson A."/>
            <person name="Durbin R.M."/>
            <person name="Hubbard T."/>
            <person name="Sulston J.E."/>
            <person name="Dunham I."/>
            <person name="Rogers J."/>
            <person name="Beck S."/>
        </authorList>
    </citation>
    <scope>NUCLEOTIDE SEQUENCE [LARGE SCALE GENOMIC DNA]</scope>
</reference>
<reference key="6">
    <citation type="journal article" date="2004" name="Genome Res.">
        <title>The status, quality, and expansion of the NIH full-length cDNA project: the Mammalian Gene Collection (MGC).</title>
        <authorList>
            <consortium name="The MGC Project Team"/>
        </authorList>
    </citation>
    <scope>NUCLEOTIDE SEQUENCE [LARGE SCALE MRNA]</scope>
</reference>
<reference key="7">
    <citation type="journal article" date="1998" name="Biochemistry">
        <title>Identification and characterization of the human HCG V gene product as a novel inhibitor of protein phosphatase-1.</title>
        <authorList>
            <person name="Zhang J."/>
            <person name="Zhang L."/>
            <person name="Zhao S."/>
            <person name="Lee E.Y.C."/>
        </authorList>
    </citation>
    <scope>NUCLEOTIDE SEQUENCE [MRNA] OF 14-126</scope>
    <scope>FUNCTION</scope>
    <source>
        <tissue>Brain</tissue>
    </source>
</reference>
<reference key="8">
    <citation type="journal article" date="2008" name="Proc. Natl. Acad. Sci. U.S.A.">
        <title>A quantitative atlas of mitotic phosphorylation.</title>
        <authorList>
            <person name="Dephoure N."/>
            <person name="Zhou C."/>
            <person name="Villen J."/>
            <person name="Beausoleil S.A."/>
            <person name="Bakalarski C.E."/>
            <person name="Elledge S.J."/>
            <person name="Gygi S.P."/>
        </authorList>
    </citation>
    <scope>PHOSPHORYLATION [LARGE SCALE ANALYSIS] AT SER-73; SER-74; THR-75; SER-77 AND THR-109</scope>
    <scope>IDENTIFICATION BY MASS SPECTROMETRY [LARGE SCALE ANALYSIS]</scope>
    <source>
        <tissue>Cervix carcinoma</tissue>
    </source>
</reference>
<reference key="9">
    <citation type="journal article" date="2010" name="Sci. Signal.">
        <title>Quantitative phosphoproteomics reveals widespread full phosphorylation site occupancy during mitosis.</title>
        <authorList>
            <person name="Olsen J.V."/>
            <person name="Vermeulen M."/>
            <person name="Santamaria A."/>
            <person name="Kumar C."/>
            <person name="Miller M.L."/>
            <person name="Jensen L.J."/>
            <person name="Gnad F."/>
            <person name="Cox J."/>
            <person name="Jensen T.S."/>
            <person name="Nigg E.A."/>
            <person name="Brunak S."/>
            <person name="Mann M."/>
        </authorList>
    </citation>
    <scope>IDENTIFICATION BY MASS SPECTROMETRY [LARGE SCALE ANALYSIS]</scope>
    <source>
        <tissue>Cervix carcinoma</tissue>
    </source>
</reference>
<reference key="10">
    <citation type="journal article" date="2012" name="Proc. Natl. Acad. Sci. U.S.A.">
        <title>N-terminal acetylome analyses and functional insights of the N-terminal acetyltransferase NatB.</title>
        <authorList>
            <person name="Van Damme P."/>
            <person name="Lasa M."/>
            <person name="Polevoda B."/>
            <person name="Gazquez C."/>
            <person name="Elosegui-Artola A."/>
            <person name="Kim D.S."/>
            <person name="De Juan-Pardo E."/>
            <person name="Demeyer K."/>
            <person name="Hole K."/>
            <person name="Larrea E."/>
            <person name="Timmerman E."/>
            <person name="Prieto J."/>
            <person name="Arnesen T."/>
            <person name="Sherman F."/>
            <person name="Gevaert K."/>
            <person name="Aldabe R."/>
        </authorList>
    </citation>
    <scope>ACETYLATION [LARGE SCALE ANALYSIS] AT ALA-2</scope>
    <scope>CLEAVAGE OF INITIATOR METHIONINE [LARGE SCALE ANALYSIS]</scope>
    <scope>IDENTIFICATION BY MASS SPECTROMETRY [LARGE SCALE ANALYSIS]</scope>
</reference>
<reference key="11">
    <citation type="journal article" date="2013" name="J. Proteome Res.">
        <title>Toward a comprehensive characterization of a human cancer cell phosphoproteome.</title>
        <authorList>
            <person name="Zhou H."/>
            <person name="Di Palma S."/>
            <person name="Preisinger C."/>
            <person name="Peng M."/>
            <person name="Polat A.N."/>
            <person name="Heck A.J."/>
            <person name="Mohammed S."/>
        </authorList>
    </citation>
    <scope>IDENTIFICATION BY MASS SPECTROMETRY [LARGE SCALE ANALYSIS]</scope>
    <source>
        <tissue>Cervix carcinoma</tissue>
        <tissue>Erythroleukemia</tissue>
    </source>
</reference>
<reference key="12">
    <citation type="journal article" date="2016" name="Elife">
        <title>RING finger E3 ligase PPP1R11 regulates TLR2 signaling and innate immunity.</title>
        <authorList>
            <person name="McKelvey A.C."/>
            <person name="Lear T.B."/>
            <person name="Dunn S.R."/>
            <person name="Evankovich J."/>
            <person name="Londino J.D."/>
            <person name="Bednash J.S."/>
            <person name="Zhang Y."/>
            <person name="McVerry B.J."/>
            <person name="Liu Y."/>
            <person name="Chen B.B."/>
        </authorList>
    </citation>
    <scope>FUNCTION</scope>
    <scope>MUTAGENESIS OF HIS-52; 60-CYS--CYS-62; CYS-85; HIS-87 AND HIS-94</scope>
    <scope>REGION ZINC-FINGER DOMAIN</scope>
    <scope>AUTOUBIQUITINATION</scope>
</reference>
<organism>
    <name type="scientific">Homo sapiens</name>
    <name type="common">Human</name>
    <dbReference type="NCBI Taxonomy" id="9606"/>
    <lineage>
        <taxon>Eukaryota</taxon>
        <taxon>Metazoa</taxon>
        <taxon>Chordata</taxon>
        <taxon>Craniata</taxon>
        <taxon>Vertebrata</taxon>
        <taxon>Euteleostomi</taxon>
        <taxon>Mammalia</taxon>
        <taxon>Eutheria</taxon>
        <taxon>Euarchontoglires</taxon>
        <taxon>Primates</taxon>
        <taxon>Haplorrhini</taxon>
        <taxon>Catarrhini</taxon>
        <taxon>Hominidae</taxon>
        <taxon>Homo</taxon>
    </lineage>
</organism>
<protein>
    <recommendedName>
        <fullName evidence="6">E3 ubiquitin-protein ligase PPP1R11</fullName>
        <ecNumber>2.3.2.27</ecNumber>
    </recommendedName>
    <alternativeName>
        <fullName>Hemochromatosis candidate gene V protein</fullName>
        <shortName>HCG V</shortName>
    </alternativeName>
    <alternativeName>
        <fullName>Protein phosphatase 1 regulatory subunit 11</fullName>
    </alternativeName>
    <alternativeName>
        <fullName>Protein phosphatase inhibitor 3</fullName>
    </alternativeName>
</protein>
<comment type="function">
    <text evidence="3 5">Atypical E3 ubiquitin-protein ligase which ubiquitinates TLR2 at 'Lys-754' leading to its degradation by the proteasome. Plays a role in regulating inflammatory cytokine release and gram-positive bacterial clearance by functioning, in part, through the ubiquitination and degradation of TLR2 (PubMed:27805901). Inhibitor of protein phosphatase 1 (PubMed:9843442).</text>
</comment>
<comment type="catalytic activity">
    <reaction>
        <text>S-ubiquitinyl-[E2 ubiquitin-conjugating enzyme]-L-cysteine + [acceptor protein]-L-lysine = [E2 ubiquitin-conjugating enzyme]-L-cysteine + N(6)-ubiquitinyl-[acceptor protein]-L-lysine.</text>
        <dbReference type="EC" id="2.3.2.27"/>
    </reaction>
</comment>
<comment type="pathway">
    <text>Protein modification; protein ubiquitination.</text>
</comment>
<comment type="subunit">
    <text evidence="1">Interacts with TLR2 and UBE2D2.</text>
</comment>
<comment type="interaction">
    <interactant intactId="EBI-1048104">
        <id>O60927</id>
    </interactant>
    <interactant intactId="EBI-718729">
        <id>P55212</id>
        <label>CASP6</label>
    </interactant>
    <organismsDiffer>false</organismsDiffer>
    <experiments>3</experiments>
</comment>
<comment type="interaction">
    <interactant intactId="EBI-1048104">
        <id>O60927</id>
    </interactant>
    <interactant intactId="EBI-16041593">
        <id>O94985-2</id>
        <label>CLSTN1</label>
    </interactant>
    <organismsDiffer>false</organismsDiffer>
    <experiments>3</experiments>
</comment>
<comment type="interaction">
    <interactant intactId="EBI-1048104">
        <id>O60927</id>
    </interactant>
    <interactant intactId="EBI-348399">
        <id>P22607</id>
        <label>FGFR3</label>
    </interactant>
    <organismsDiffer>false</organismsDiffer>
    <experiments>3</experiments>
</comment>
<comment type="interaction">
    <interactant intactId="EBI-1048104">
        <id>O60927</id>
    </interactant>
    <interactant intactId="EBI-9091197">
        <id>Q8IY31-3</id>
        <label>IFT20</label>
    </interactant>
    <organismsDiffer>false</organismsDiffer>
    <experiments>3</experiments>
</comment>
<comment type="interaction">
    <interactant intactId="EBI-1048104">
        <id>O60927</id>
    </interactant>
    <interactant intactId="EBI-21591415">
        <id>P13473-2</id>
        <label>LAMP2</label>
    </interactant>
    <organismsDiffer>false</organismsDiffer>
    <experiments>3</experiments>
</comment>
<comment type="interaction">
    <interactant intactId="EBI-1048104">
        <id>O60927</id>
    </interactant>
    <interactant intactId="EBI-748974">
        <id>Q96CV9</id>
        <label>OPTN</label>
    </interactant>
    <organismsDiffer>false</organismsDiffer>
    <experiments>3</experiments>
</comment>
<comment type="interaction">
    <interactant intactId="EBI-1048104">
        <id>O60927</id>
    </interactant>
    <interactant intactId="EBI-352350">
        <id>P62140</id>
        <label>PPP1CB</label>
    </interactant>
    <organismsDiffer>false</organismsDiffer>
    <experiments>8</experiments>
</comment>
<comment type="interaction">
    <interactant intactId="EBI-1048104">
        <id>O60927</id>
    </interactant>
    <interactant intactId="EBI-356283">
        <id>P36873</id>
        <label>PPP1CC</label>
    </interactant>
    <organismsDiffer>false</organismsDiffer>
    <experiments>9</experiments>
</comment>
<comment type="interaction">
    <interactant intactId="EBI-1048104">
        <id>O60927</id>
    </interactant>
    <interactant intactId="EBI-286642">
        <id>P62826</id>
        <label>RAN</label>
    </interactant>
    <organismsDiffer>false</organismsDiffer>
    <experiments>3</experiments>
</comment>
<comment type="interaction">
    <interactant intactId="EBI-1048104">
        <id>O60927</id>
    </interactant>
    <interactant intactId="EBI-741480">
        <id>Q9UMX0</id>
        <label>UBQLN1</label>
    </interactant>
    <organismsDiffer>false</organismsDiffer>
    <experiments>3</experiments>
</comment>
<comment type="interaction">
    <interactant intactId="EBI-1048104">
        <id>O60927</id>
    </interactant>
    <interactant intactId="EBI-12111538">
        <id>Q8IY57-5</id>
        <label>YAF2</label>
    </interactant>
    <organismsDiffer>false</organismsDiffer>
    <experiments>3</experiments>
</comment>
<comment type="interaction">
    <interactant intactId="EBI-1048104">
        <id>O60927</id>
    </interactant>
    <interactant intactId="EBI-2008988">
        <id>P62139</id>
        <label>PPP1CA</label>
    </interactant>
    <organismsDiffer>true</organismsDiffer>
    <experiments>2</experiments>
</comment>
<comment type="tissue specificity">
    <text evidence="4">Widely expressed.</text>
</comment>
<comment type="PTM">
    <text evidence="3">Auto-ubiquitinated.</text>
</comment>
<accession>O60927</accession>
<dbReference type="EC" id="2.3.2.27"/>
<dbReference type="EMBL" id="X81003">
    <property type="protein sequence ID" value="CAC16920.1"/>
    <property type="molecule type" value="mRNA"/>
</dbReference>
<dbReference type="EMBL" id="X89902">
    <property type="protein sequence ID" value="CAC16919.1"/>
    <property type="molecule type" value="Genomic_DNA"/>
</dbReference>
<dbReference type="EMBL" id="U53588">
    <property type="protein sequence ID" value="AAC52082.1"/>
    <property type="molecule type" value="Genomic_DNA"/>
</dbReference>
<dbReference type="EMBL" id="BA000025">
    <property type="protein sequence ID" value="BAB63334.1"/>
    <property type="molecule type" value="Genomic_DNA"/>
</dbReference>
<dbReference type="EMBL" id="AB088087">
    <property type="protein sequence ID" value="BAC54919.1"/>
    <property type="molecule type" value="Genomic_DNA"/>
</dbReference>
<dbReference type="EMBL" id="AB202082">
    <property type="protein sequence ID" value="BAE78601.1"/>
    <property type="molecule type" value="Genomic_DNA"/>
</dbReference>
<dbReference type="EMBL" id="AL669914">
    <property type="status" value="NOT_ANNOTATED_CDS"/>
    <property type="molecule type" value="Genomic_DNA"/>
</dbReference>
<dbReference type="EMBL" id="AL671859">
    <property type="status" value="NOT_ANNOTATED_CDS"/>
    <property type="molecule type" value="Genomic_DNA"/>
</dbReference>
<dbReference type="EMBL" id="AL845439">
    <property type="status" value="NOT_ANNOTATED_CDS"/>
    <property type="molecule type" value="Genomic_DNA"/>
</dbReference>
<dbReference type="EMBL" id="BC102010">
    <property type="protein sequence ID" value="AAI02011.1"/>
    <property type="molecule type" value="mRNA"/>
</dbReference>
<dbReference type="EMBL" id="BC102011">
    <property type="protein sequence ID" value="AAI02012.1"/>
    <property type="molecule type" value="mRNA"/>
</dbReference>
<dbReference type="EMBL" id="BC104750">
    <property type="protein sequence ID" value="AAI04751.1"/>
    <property type="molecule type" value="mRNA"/>
</dbReference>
<dbReference type="CCDS" id="CCDS4671.1"/>
<dbReference type="RefSeq" id="NP_068778.1">
    <property type="nucleotide sequence ID" value="NM_021959.3"/>
</dbReference>
<dbReference type="RefSeq" id="XP_047275235.1">
    <property type="nucleotide sequence ID" value="XM_047419279.1"/>
</dbReference>
<dbReference type="RefSeq" id="XP_047275236.1">
    <property type="nucleotide sequence ID" value="XM_047419280.1"/>
</dbReference>
<dbReference type="RefSeq" id="XP_054184480.1">
    <property type="nucleotide sequence ID" value="XM_054328505.1"/>
</dbReference>
<dbReference type="RefSeq" id="XP_054185834.1">
    <property type="nucleotide sequence ID" value="XM_054329859.1"/>
</dbReference>
<dbReference type="RefSeq" id="XP_054186318.1">
    <property type="nucleotide sequence ID" value="XM_054330343.1"/>
</dbReference>
<dbReference type="RefSeq" id="XP_054186834.1">
    <property type="nucleotide sequence ID" value="XM_054330859.1"/>
</dbReference>
<dbReference type="RefSeq" id="XP_054212254.1">
    <property type="nucleotide sequence ID" value="XM_054356279.1"/>
</dbReference>
<dbReference type="PDB" id="8DWK">
    <property type="method" value="X-ray"/>
    <property type="resolution" value="2.50 A"/>
    <property type="chains" value="C/D=27-68"/>
</dbReference>
<dbReference type="PDB" id="8DWL">
    <property type="method" value="X-ray"/>
    <property type="resolution" value="2.00 A"/>
    <property type="chains" value="B/D=27-68"/>
</dbReference>
<dbReference type="PDB" id="8U5G">
    <property type="method" value="X-ray"/>
    <property type="resolution" value="3.20 A"/>
    <property type="chains" value="C=27-68"/>
</dbReference>
<dbReference type="PDBsum" id="8DWK"/>
<dbReference type="PDBsum" id="8DWL"/>
<dbReference type="PDBsum" id="8U5G"/>
<dbReference type="SMR" id="O60927"/>
<dbReference type="BioGRID" id="112852">
    <property type="interactions" value="25"/>
</dbReference>
<dbReference type="FunCoup" id="O60927">
    <property type="interactions" value="1909"/>
</dbReference>
<dbReference type="IntAct" id="O60927">
    <property type="interactions" value="19"/>
</dbReference>
<dbReference type="MINT" id="O60927"/>
<dbReference type="STRING" id="9606.ENSP00000365963"/>
<dbReference type="GlyCosmos" id="O60927">
    <property type="glycosylation" value="1 site, 1 glycan"/>
</dbReference>
<dbReference type="GlyGen" id="O60927">
    <property type="glycosylation" value="4 sites, 1 O-linked glycan (2 sites)"/>
</dbReference>
<dbReference type="iPTMnet" id="O60927"/>
<dbReference type="MetOSite" id="O60927"/>
<dbReference type="PhosphoSitePlus" id="O60927"/>
<dbReference type="BioMuta" id="PPP1R11"/>
<dbReference type="jPOST" id="O60927"/>
<dbReference type="MassIVE" id="O60927"/>
<dbReference type="PaxDb" id="9606-ENSP00000365963"/>
<dbReference type="PeptideAtlas" id="O60927"/>
<dbReference type="ProteomicsDB" id="49672"/>
<dbReference type="Pumba" id="O60927"/>
<dbReference type="TopDownProteomics" id="O60927"/>
<dbReference type="Antibodypedia" id="26202">
    <property type="antibodies" value="105 antibodies from 23 providers"/>
</dbReference>
<dbReference type="DNASU" id="6992"/>
<dbReference type="Ensembl" id="ENST00000376772.8">
    <property type="protein sequence ID" value="ENSP00000365963.3"/>
    <property type="gene ID" value="ENSG00000204619.8"/>
</dbReference>
<dbReference type="Ensembl" id="ENST00000383612.8">
    <property type="protein sequence ID" value="ENSP00000373107.4"/>
    <property type="gene ID" value="ENSG00000206501.8"/>
</dbReference>
<dbReference type="Ensembl" id="ENST00000431424.6">
    <property type="protein sequence ID" value="ENSP00000411038.2"/>
    <property type="gene ID" value="ENSG00000236560.6"/>
</dbReference>
<dbReference type="Ensembl" id="ENST00000431977.6">
    <property type="protein sequence ID" value="ENSP00000407981.2"/>
    <property type="gene ID" value="ENSG00000237829.6"/>
</dbReference>
<dbReference type="Ensembl" id="ENST00000436591.6">
    <property type="protein sequence ID" value="ENSP00000414808.2"/>
    <property type="gene ID" value="ENSG00000234058.6"/>
</dbReference>
<dbReference type="Ensembl" id="ENST00000437937.6">
    <property type="protein sequence ID" value="ENSP00000394056.2"/>
    <property type="gene ID" value="ENSG00000233314.6"/>
</dbReference>
<dbReference type="Ensembl" id="ENST00000448378.6">
    <property type="protein sequence ID" value="ENSP00000403557.2"/>
    <property type="gene ID" value="ENSG00000237403.6"/>
</dbReference>
<dbReference type="Ensembl" id="ENST00000452679.6">
    <property type="protein sequence ID" value="ENSP00000412297.2"/>
    <property type="gene ID" value="ENSG00000227720.6"/>
</dbReference>
<dbReference type="GeneID" id="6992"/>
<dbReference type="KEGG" id="hsa:6992"/>
<dbReference type="MANE-Select" id="ENST00000376772.8">
    <property type="protein sequence ID" value="ENSP00000365963.3"/>
    <property type="RefSeq nucleotide sequence ID" value="NM_021959.3"/>
    <property type="RefSeq protein sequence ID" value="NP_068778.1"/>
</dbReference>
<dbReference type="UCSC" id="uc003npb.4">
    <property type="organism name" value="human"/>
</dbReference>
<dbReference type="AGR" id="HGNC:9285"/>
<dbReference type="CTD" id="6992"/>
<dbReference type="DisGeNET" id="6992"/>
<dbReference type="GeneCards" id="PPP1R11"/>
<dbReference type="HGNC" id="HGNC:9285">
    <property type="gene designation" value="PPP1R11"/>
</dbReference>
<dbReference type="HPA" id="ENSG00000204619">
    <property type="expression patterns" value="Low tissue specificity"/>
</dbReference>
<dbReference type="MIM" id="606670">
    <property type="type" value="gene"/>
</dbReference>
<dbReference type="neXtProt" id="NX_O60927"/>
<dbReference type="OpenTargets" id="ENSG00000204619"/>
<dbReference type="PharmGKB" id="PA33614"/>
<dbReference type="VEuPathDB" id="HostDB:ENSG00000204619"/>
<dbReference type="eggNOG" id="KOG4102">
    <property type="taxonomic scope" value="Eukaryota"/>
</dbReference>
<dbReference type="GeneTree" id="ENSGT00390000001153"/>
<dbReference type="HOGENOM" id="CLU_098333_6_2_1"/>
<dbReference type="InParanoid" id="O60927"/>
<dbReference type="OMA" id="CILGHSR"/>
<dbReference type="OrthoDB" id="307488at2759"/>
<dbReference type="PAN-GO" id="O60927">
    <property type="GO annotations" value="4 GO annotations based on evolutionary models"/>
</dbReference>
<dbReference type="PhylomeDB" id="O60927"/>
<dbReference type="TreeFam" id="TF352541"/>
<dbReference type="PathwayCommons" id="O60927"/>
<dbReference type="SignaLink" id="O60927"/>
<dbReference type="UniPathway" id="UPA00143"/>
<dbReference type="BioGRID-ORCS" id="6992">
    <property type="hits" value="673 hits in 1173 CRISPR screens"/>
</dbReference>
<dbReference type="CD-CODE" id="8C2F96ED">
    <property type="entry name" value="Centrosome"/>
</dbReference>
<dbReference type="ChiTaRS" id="PPP1R11">
    <property type="organism name" value="human"/>
</dbReference>
<dbReference type="GeneWiki" id="PPP1R11"/>
<dbReference type="GenomeRNAi" id="6992"/>
<dbReference type="Pharos" id="O60927">
    <property type="development level" value="Tbio"/>
</dbReference>
<dbReference type="PRO" id="PR:O60927"/>
<dbReference type="Proteomes" id="UP000005640">
    <property type="component" value="Chromosome 6"/>
</dbReference>
<dbReference type="RNAct" id="O60927">
    <property type="molecule type" value="protein"/>
</dbReference>
<dbReference type="Bgee" id="ENSG00000204619">
    <property type="expression patterns" value="Expressed in rectum and 100 other cell types or tissues"/>
</dbReference>
<dbReference type="ExpressionAtlas" id="O60927">
    <property type="expression patterns" value="baseline and differential"/>
</dbReference>
<dbReference type="GO" id="GO:0005737">
    <property type="term" value="C:cytoplasm"/>
    <property type="evidence" value="ECO:0000250"/>
    <property type="project" value="UniProtKB"/>
</dbReference>
<dbReference type="GO" id="GO:0005634">
    <property type="term" value="C:nucleus"/>
    <property type="evidence" value="ECO:0000318"/>
    <property type="project" value="GO_Central"/>
</dbReference>
<dbReference type="GO" id="GO:0019902">
    <property type="term" value="F:phosphatase binding"/>
    <property type="evidence" value="ECO:0000353"/>
    <property type="project" value="DisProt"/>
</dbReference>
<dbReference type="GO" id="GO:0008157">
    <property type="term" value="F:protein phosphatase 1 binding"/>
    <property type="evidence" value="ECO:0000318"/>
    <property type="project" value="GO_Central"/>
</dbReference>
<dbReference type="GO" id="GO:0004864">
    <property type="term" value="F:protein phosphatase inhibitor activity"/>
    <property type="evidence" value="ECO:0000314"/>
    <property type="project" value="DisProt"/>
</dbReference>
<dbReference type="GO" id="GO:0004865">
    <property type="term" value="F:protein serine/threonine phosphatase inhibitor activity"/>
    <property type="evidence" value="ECO:0000318"/>
    <property type="project" value="GO_Central"/>
</dbReference>
<dbReference type="GO" id="GO:0061630">
    <property type="term" value="F:ubiquitin protein ligase activity"/>
    <property type="evidence" value="ECO:0000314"/>
    <property type="project" value="UniProtKB"/>
</dbReference>
<dbReference type="GO" id="GO:0050830">
    <property type="term" value="P:defense response to Gram-positive bacterium"/>
    <property type="evidence" value="ECO:0000250"/>
    <property type="project" value="UniProtKB"/>
</dbReference>
<dbReference type="GO" id="GO:0001818">
    <property type="term" value="P:negative regulation of cytokine production"/>
    <property type="evidence" value="ECO:0000250"/>
    <property type="project" value="UniProtKB"/>
</dbReference>
<dbReference type="GO" id="GO:0016567">
    <property type="term" value="P:protein ubiquitination"/>
    <property type="evidence" value="ECO:0007669"/>
    <property type="project" value="UniProtKB-UniPathway"/>
</dbReference>
<dbReference type="GO" id="GO:0006511">
    <property type="term" value="P:ubiquitin-dependent protein catabolic process"/>
    <property type="evidence" value="ECO:0000315"/>
    <property type="project" value="UniProtKB"/>
</dbReference>
<dbReference type="DisProt" id="DP00219"/>
<dbReference type="InterPro" id="IPR011107">
    <property type="entry name" value="PPI_Ypi1"/>
</dbReference>
<dbReference type="PANTHER" id="PTHR20835:SF0">
    <property type="entry name" value="E3 UBIQUITIN-PROTEIN LIGASE PPP1R11"/>
    <property type="match status" value="1"/>
</dbReference>
<dbReference type="PANTHER" id="PTHR20835">
    <property type="entry name" value="E3 UBIQUITIN-PROTEIN LIGASE PPP1R11-RELATED"/>
    <property type="match status" value="1"/>
</dbReference>
<dbReference type="Pfam" id="PF07491">
    <property type="entry name" value="PPI_Ypi1"/>
    <property type="match status" value="1"/>
</dbReference>
<evidence type="ECO:0000250" key="1">
    <source>
        <dbReference type="UniProtKB" id="Q8K1L5"/>
    </source>
</evidence>
<evidence type="ECO:0000256" key="2">
    <source>
        <dbReference type="SAM" id="MobiDB-lite"/>
    </source>
</evidence>
<evidence type="ECO:0000269" key="3">
    <source>
    </source>
</evidence>
<evidence type="ECO:0000269" key="4">
    <source>
    </source>
</evidence>
<evidence type="ECO:0000269" key="5">
    <source>
    </source>
</evidence>
<evidence type="ECO:0000303" key="6">
    <source>
    </source>
</evidence>
<evidence type="ECO:0007744" key="7">
    <source>
    </source>
</evidence>
<evidence type="ECO:0007744" key="8">
    <source>
    </source>
</evidence>
<evidence type="ECO:0007829" key="9">
    <source>
        <dbReference type="PDB" id="8DWK"/>
    </source>
</evidence>
<evidence type="ECO:0007829" key="10">
    <source>
        <dbReference type="PDB" id="8DWL"/>
    </source>
</evidence>
<sequence length="126" mass="13953">MAEAGAGLSETVTETTVTVTTEPENRSLTIKLRKRKPEKKVEWTSDTVDNEHMGRRSSKCCCIYEKPRAFGESSTESDEEEEEGCGHTHCVRGHRKGRRRATLGPTPTTPPQPPDPSQPPPGPMQH</sequence>
<keyword id="KW-0002">3D-structure</keyword>
<keyword id="KW-0007">Acetylation</keyword>
<keyword id="KW-0597">Phosphoprotein</keyword>
<keyword id="KW-0650">Protein phosphatase inhibitor</keyword>
<keyword id="KW-1267">Proteomics identification</keyword>
<keyword id="KW-1185">Reference proteome</keyword>
<keyword id="KW-0808">Transferase</keyword>
<keyword id="KW-0832">Ubl conjugation</keyword>
<keyword id="KW-0833">Ubl conjugation pathway</keyword>
<name>PP1RB_HUMAN</name>